<proteinExistence type="inferred from homology"/>
<name>SIRE_LEPMC</name>
<comment type="function">
    <text evidence="4 5 6 7 10 11">Cytochrome P450 monooxygenase; part of the gene cluster that mediates the biosynthesis of sirodesmin PL, an epipolythiodioxopiperazine (ETP) characterized by a disulfide bridged cyclic dipeptide and that acts as a phytotoxin which is involved in the blackleg didease of canola (PubMed:15387811, PubMed:18272357, PubMed:19762440). SirD catalyzes the O-prenylation of L-tyrosine (L-Tyr) in the presence of dimethylallyl diphosphate (DMAPP) to yield 4-O-dimethylallyl-L-Tyr, and therefore represents probably the first pathway-specific enzyme in the biosynthesis of sirodesmin PL (PubMed:19762440, PubMed:21038099, PubMed:24083562). 4-O-dimethylallyl-L-Tyr, then undergoes condensation with L-Ser in a reaction catalyzed by the non-ribosomal peptide synthase sirP to form the diketopiperazine (DKP) backbone (PubMed:18272357). Further bishydroxylation of the DKP performed by the cytochrome P450 monooxygenase sirC leads to the production of the intermediate phomamide (PubMed:27390873). This step is essential to form the reactive thiol group required for toxicity of sirodesmin PL (PubMed:27390873). The next steps of sirodesmin biosynthesis are not well understood yet, but some predictions could be made from intermediate compounds identification (PubMed:18272357). Phomamide is converted into phomalizarine via oxidation, probably by sirT (PubMed:18272357). Further oxidation, methylation (by sirM or sirN) and reduction steps convert phomalizarine to deacetyl sirodesmin (PubMed:18272357). Finally, acetyltransferase sirH probably acetylates deacetyl sirodesmin to produce sirodesmin PL (PubMed:18272357).</text>
</comment>
<comment type="cofactor">
    <cofactor evidence="1">
        <name>heme</name>
        <dbReference type="ChEBI" id="CHEBI:30413"/>
    </cofactor>
</comment>
<comment type="pathway">
    <text evidence="10">Mycotoxin biosynthesis.</text>
</comment>
<comment type="subcellular location">
    <subcellularLocation>
        <location evidence="2">Membrane</location>
        <topology evidence="2">Single-pass membrane protein</topology>
    </subcellularLocation>
</comment>
<comment type="similarity">
    <text evidence="9">Belongs to the cytochrome P450 family.</text>
</comment>
<gene>
    <name evidence="8" type="primary">sirE</name>
</gene>
<reference key="1">
    <citation type="journal article" date="2004" name="Mol. Microbiol.">
        <title>The sirodesmin biosynthetic gene cluster of the plant pathogenic fungus Leptosphaeria maculans.</title>
        <authorList>
            <person name="Gardiner D.M."/>
            <person name="Cozijnsen A.J."/>
            <person name="Wilson L.M."/>
            <person name="Pedras M.S."/>
            <person name="Howlett B.J."/>
        </authorList>
    </citation>
    <scope>NUCLEOTIDE SEQUENCE [GENOMIC DNA]</scope>
    <scope>FUNCTION</scope>
</reference>
<reference key="2">
    <citation type="journal article" date="2008" name="Mycol. Res.">
        <title>Biosynthetic gene clusters for epipolythiodioxopiperazines in filamentous fungi.</title>
        <authorList>
            <person name="Fox E.M."/>
            <person name="Howlett B.J."/>
        </authorList>
    </citation>
    <scope>FUNCTION</scope>
</reference>
<reference key="3">
    <citation type="journal article" date="2010" name="Microbiology">
        <title>A tyrosine O-prenyltransferase catalyses the first pathway-specific step in the biosynthesis of sirodesmin PL.</title>
        <authorList>
            <person name="Kremer A."/>
            <person name="Li S.M."/>
        </authorList>
    </citation>
    <scope>FUNCTION</scope>
</reference>
<reference key="4">
    <citation type="journal article" date="2011" name="Appl. Microbiol. Biotechnol.">
        <title>The tyrosine O-prenyltransferase SirD catalyzes O-, N-, and C-prenylations.</title>
        <authorList>
            <person name="Zou H.X."/>
            <person name="Xie X."/>
            <person name="Zheng X.D."/>
            <person name="Li S.M."/>
        </authorList>
    </citation>
    <scope>FUNCTION</scope>
</reference>
<reference key="5">
    <citation type="journal article" date="2013" name="ACS Chem. Biol.">
        <title>Tyrosine O-prenyltransferase SirD catalyzes S-, C-, and N-prenylations on tyrosine and tryptophan derivatives.</title>
        <authorList>
            <person name="Rudolf J.D."/>
            <person name="Poulter C.D."/>
        </authorList>
    </citation>
    <scope>FUNCTION</scope>
</reference>
<reference key="6">
    <citation type="journal article" date="2016" name="PLoS ONE">
        <title>The epipolythiodiketopiperazine gene cluster in Claviceps purpurea: dysfunctional cytochrome P450 enzyme prevents formation of the previously unknown clapurines.</title>
        <authorList>
            <person name="Dopstadt J."/>
            <person name="Neubauer L."/>
            <person name="Tudzynski P."/>
            <person name="Humpf H.U."/>
        </authorList>
    </citation>
    <scope>FUNCTION</scope>
</reference>
<protein>
    <recommendedName>
        <fullName evidence="8">Cytochrome P450 monooxygenase sirE</fullName>
        <ecNumber evidence="10">1.-.-.-</ecNumber>
    </recommendedName>
    <alternativeName>
        <fullName evidence="8">Sirodesmin biosynthesis protein E</fullName>
    </alternativeName>
</protein>
<feature type="chain" id="PRO_0000437708" description="Cytochrome P450 monooxygenase sirE">
    <location>
        <begin position="1"/>
        <end position="411"/>
    </location>
</feature>
<feature type="transmembrane region" description="Helical" evidence="2">
    <location>
        <begin position="181"/>
        <end position="203"/>
    </location>
</feature>
<feature type="binding site" description="axial binding residue" evidence="1">
    <location>
        <position position="352"/>
    </location>
    <ligand>
        <name>heme</name>
        <dbReference type="ChEBI" id="CHEBI:30413"/>
    </ligand>
    <ligandPart>
        <name>Fe</name>
        <dbReference type="ChEBI" id="CHEBI:18248"/>
    </ligandPart>
</feature>
<feature type="glycosylation site" description="N-linked (GlcNAc...) asparagine" evidence="3">
    <location>
        <position position="12"/>
    </location>
</feature>
<feature type="glycosylation site" description="N-linked (GlcNAc...) asparagine" evidence="3">
    <location>
        <position position="149"/>
    </location>
</feature>
<feature type="glycosylation site" description="N-linked (GlcNAc...) asparagine" evidence="3">
    <location>
        <position position="342"/>
    </location>
</feature>
<organism>
    <name type="scientific">Leptosphaeria maculans</name>
    <name type="common">Blackleg fungus</name>
    <name type="synonym">Phoma lingam</name>
    <dbReference type="NCBI Taxonomy" id="5022"/>
    <lineage>
        <taxon>Eukaryota</taxon>
        <taxon>Fungi</taxon>
        <taxon>Dikarya</taxon>
        <taxon>Ascomycota</taxon>
        <taxon>Pezizomycotina</taxon>
        <taxon>Dothideomycetes</taxon>
        <taxon>Pleosporomycetidae</taxon>
        <taxon>Pleosporales</taxon>
        <taxon>Pleosporineae</taxon>
        <taxon>Leptosphaeriaceae</taxon>
        <taxon>Plenodomus</taxon>
        <taxon>Plenodomus lingam/Leptosphaeria maculans species complex</taxon>
    </lineage>
</organism>
<keyword id="KW-0325">Glycoprotein</keyword>
<keyword id="KW-0349">Heme</keyword>
<keyword id="KW-0408">Iron</keyword>
<keyword id="KW-0472">Membrane</keyword>
<keyword id="KW-0479">Metal-binding</keyword>
<keyword id="KW-0503">Monooxygenase</keyword>
<keyword id="KW-0560">Oxidoreductase</keyword>
<keyword id="KW-0812">Transmembrane</keyword>
<keyword id="KW-1133">Transmembrane helix</keyword>
<keyword id="KW-0843">Virulence</keyword>
<dbReference type="EC" id="1.-.-.-" evidence="10"/>
<dbReference type="EMBL" id="AY553235">
    <property type="protein sequence ID" value="AAS92549.1"/>
    <property type="molecule type" value="Genomic_DNA"/>
</dbReference>
<dbReference type="SMR" id="Q6Q879"/>
<dbReference type="GlyCosmos" id="Q6Q879">
    <property type="glycosylation" value="3 sites, No reported glycans"/>
</dbReference>
<dbReference type="GO" id="GO:0016020">
    <property type="term" value="C:membrane"/>
    <property type="evidence" value="ECO:0007669"/>
    <property type="project" value="UniProtKB-SubCell"/>
</dbReference>
<dbReference type="GO" id="GO:0020037">
    <property type="term" value="F:heme binding"/>
    <property type="evidence" value="ECO:0007669"/>
    <property type="project" value="InterPro"/>
</dbReference>
<dbReference type="GO" id="GO:0005506">
    <property type="term" value="F:iron ion binding"/>
    <property type="evidence" value="ECO:0007669"/>
    <property type="project" value="InterPro"/>
</dbReference>
<dbReference type="GO" id="GO:0004497">
    <property type="term" value="F:monooxygenase activity"/>
    <property type="evidence" value="ECO:0007669"/>
    <property type="project" value="UniProtKB-KW"/>
</dbReference>
<dbReference type="GO" id="GO:0016705">
    <property type="term" value="F:oxidoreductase activity, acting on paired donors, with incorporation or reduction of molecular oxygen"/>
    <property type="evidence" value="ECO:0007669"/>
    <property type="project" value="InterPro"/>
</dbReference>
<dbReference type="GO" id="GO:0019748">
    <property type="term" value="P:secondary metabolic process"/>
    <property type="evidence" value="ECO:0007669"/>
    <property type="project" value="UniProtKB-ARBA"/>
</dbReference>
<dbReference type="CDD" id="cd11041">
    <property type="entry name" value="CYP503A1-like"/>
    <property type="match status" value="1"/>
</dbReference>
<dbReference type="Gene3D" id="1.10.630.10">
    <property type="entry name" value="Cytochrome P450"/>
    <property type="match status" value="1"/>
</dbReference>
<dbReference type="InterPro" id="IPR001128">
    <property type="entry name" value="Cyt_P450"/>
</dbReference>
<dbReference type="InterPro" id="IPR002403">
    <property type="entry name" value="Cyt_P450_E_grp-IV"/>
</dbReference>
<dbReference type="InterPro" id="IPR036396">
    <property type="entry name" value="Cyt_P450_sf"/>
</dbReference>
<dbReference type="PANTHER" id="PTHR46206">
    <property type="entry name" value="CYTOCHROME P450"/>
    <property type="match status" value="1"/>
</dbReference>
<dbReference type="PANTHER" id="PTHR46206:SF5">
    <property type="entry name" value="P450, PUTATIVE (EUROFUNG)-RELATED"/>
    <property type="match status" value="1"/>
</dbReference>
<dbReference type="Pfam" id="PF00067">
    <property type="entry name" value="p450"/>
    <property type="match status" value="2"/>
</dbReference>
<dbReference type="PRINTS" id="PR00465">
    <property type="entry name" value="EP450IV"/>
</dbReference>
<dbReference type="SUPFAM" id="SSF48264">
    <property type="entry name" value="Cytochrome P450"/>
    <property type="match status" value="1"/>
</dbReference>
<evidence type="ECO:0000250" key="1">
    <source>
        <dbReference type="UniProtKB" id="P04798"/>
    </source>
</evidence>
<evidence type="ECO:0000255" key="2"/>
<evidence type="ECO:0000255" key="3">
    <source>
        <dbReference type="PROSITE-ProRule" id="PRU00498"/>
    </source>
</evidence>
<evidence type="ECO:0000269" key="4">
    <source>
    </source>
</evidence>
<evidence type="ECO:0000269" key="5">
    <source>
    </source>
</evidence>
<evidence type="ECO:0000269" key="6">
    <source>
    </source>
</evidence>
<evidence type="ECO:0000269" key="7">
    <source>
    </source>
</evidence>
<evidence type="ECO:0000303" key="8">
    <source>
    </source>
</evidence>
<evidence type="ECO:0000305" key="9"/>
<evidence type="ECO:0000305" key="10">
    <source>
    </source>
</evidence>
<evidence type="ECO:0000305" key="11">
    <source>
    </source>
</evidence>
<sequence length="411" mass="45120">MFFRYTVTLVANETDHHATVVQALLRRHIGDITPGTTQEIENALETVCGQSKEWSSTSLAAIIIAVVARSTSRLLVGPSLCRNNDYINLCIEYATEMESSAAKIRALVPFLRPLIAPYYCRRLAELRKLAHAHIAPLLAGPDSAPKEKNASSQYTAVQWLAQKLRGVPEETEERQVARIMFLNVISIFTVMMASLNVLYDILARPDVKRALLEEIAEVSGGKGDLGLGDVEFERLRRLDSCIRESQRLNPTNWIILEGQAQKDLTFSTGLCVEKGSYLSICGGAILKSNGPPLSTSSNPPPIDEFHAFRYVTPDSGISTDVSTANGNSNANSNLATAISPTNLTFGYGRMSCPGRYFAVHSIKAIVVGLLLRYDVEFEKKDGEERGRPRNVQAGNVIIPDPSVMVRVRARG</sequence>
<accession>Q6Q879</accession>